<accession>A8LR70</accession>
<evidence type="ECO:0000255" key="1">
    <source>
        <dbReference type="HAMAP-Rule" id="MF_00440"/>
    </source>
</evidence>
<feature type="chain" id="PRO_1000080744" description="Transcriptional repressor NrdR">
    <location>
        <begin position="1"/>
        <end position="155"/>
    </location>
</feature>
<feature type="domain" description="ATP-cone" evidence="1">
    <location>
        <begin position="49"/>
        <end position="139"/>
    </location>
</feature>
<feature type="zinc finger region" evidence="1">
    <location>
        <begin position="3"/>
        <end position="34"/>
    </location>
</feature>
<proteinExistence type="inferred from homology"/>
<dbReference type="EMBL" id="CP000830">
    <property type="protein sequence ID" value="ABV93993.1"/>
    <property type="molecule type" value="Genomic_DNA"/>
</dbReference>
<dbReference type="RefSeq" id="WP_012178924.1">
    <property type="nucleotide sequence ID" value="NC_009952.1"/>
</dbReference>
<dbReference type="SMR" id="A8LR70"/>
<dbReference type="STRING" id="398580.Dshi_2257"/>
<dbReference type="KEGG" id="dsh:Dshi_2257"/>
<dbReference type="eggNOG" id="COG1327">
    <property type="taxonomic scope" value="Bacteria"/>
</dbReference>
<dbReference type="HOGENOM" id="CLU_108412_0_1_5"/>
<dbReference type="OrthoDB" id="9807461at2"/>
<dbReference type="Proteomes" id="UP000006833">
    <property type="component" value="Chromosome"/>
</dbReference>
<dbReference type="GO" id="GO:0005524">
    <property type="term" value="F:ATP binding"/>
    <property type="evidence" value="ECO:0007669"/>
    <property type="project" value="UniProtKB-KW"/>
</dbReference>
<dbReference type="GO" id="GO:0003677">
    <property type="term" value="F:DNA binding"/>
    <property type="evidence" value="ECO:0007669"/>
    <property type="project" value="UniProtKB-KW"/>
</dbReference>
<dbReference type="GO" id="GO:0008270">
    <property type="term" value="F:zinc ion binding"/>
    <property type="evidence" value="ECO:0007669"/>
    <property type="project" value="UniProtKB-UniRule"/>
</dbReference>
<dbReference type="GO" id="GO:0045892">
    <property type="term" value="P:negative regulation of DNA-templated transcription"/>
    <property type="evidence" value="ECO:0007669"/>
    <property type="project" value="UniProtKB-UniRule"/>
</dbReference>
<dbReference type="HAMAP" id="MF_00440">
    <property type="entry name" value="NrdR"/>
    <property type="match status" value="1"/>
</dbReference>
<dbReference type="InterPro" id="IPR005144">
    <property type="entry name" value="ATP-cone_dom"/>
</dbReference>
<dbReference type="InterPro" id="IPR055173">
    <property type="entry name" value="NrdR-like_N"/>
</dbReference>
<dbReference type="InterPro" id="IPR003796">
    <property type="entry name" value="RNR_NrdR-like"/>
</dbReference>
<dbReference type="NCBIfam" id="TIGR00244">
    <property type="entry name" value="transcriptional regulator NrdR"/>
    <property type="match status" value="1"/>
</dbReference>
<dbReference type="PANTHER" id="PTHR30455">
    <property type="entry name" value="TRANSCRIPTIONAL REPRESSOR NRDR"/>
    <property type="match status" value="1"/>
</dbReference>
<dbReference type="PANTHER" id="PTHR30455:SF2">
    <property type="entry name" value="TRANSCRIPTIONAL REPRESSOR NRDR"/>
    <property type="match status" value="1"/>
</dbReference>
<dbReference type="Pfam" id="PF03477">
    <property type="entry name" value="ATP-cone"/>
    <property type="match status" value="1"/>
</dbReference>
<dbReference type="Pfam" id="PF22811">
    <property type="entry name" value="Zn_ribbon_NrdR"/>
    <property type="match status" value="1"/>
</dbReference>
<dbReference type="PROSITE" id="PS51161">
    <property type="entry name" value="ATP_CONE"/>
    <property type="match status" value="1"/>
</dbReference>
<name>NRDR_DINSH</name>
<keyword id="KW-0067">ATP-binding</keyword>
<keyword id="KW-0238">DNA-binding</keyword>
<keyword id="KW-0479">Metal-binding</keyword>
<keyword id="KW-0547">Nucleotide-binding</keyword>
<keyword id="KW-1185">Reference proteome</keyword>
<keyword id="KW-0678">Repressor</keyword>
<keyword id="KW-0804">Transcription</keyword>
<keyword id="KW-0805">Transcription regulation</keyword>
<keyword id="KW-0862">Zinc</keyword>
<keyword id="KW-0863">Zinc-finger</keyword>
<organism>
    <name type="scientific">Dinoroseobacter shibae (strain DSM 16493 / NCIMB 14021 / DFL 12)</name>
    <dbReference type="NCBI Taxonomy" id="398580"/>
    <lineage>
        <taxon>Bacteria</taxon>
        <taxon>Pseudomonadati</taxon>
        <taxon>Pseudomonadota</taxon>
        <taxon>Alphaproteobacteria</taxon>
        <taxon>Rhodobacterales</taxon>
        <taxon>Roseobacteraceae</taxon>
        <taxon>Dinoroseobacter</taxon>
    </lineage>
</organism>
<protein>
    <recommendedName>
        <fullName evidence="1">Transcriptional repressor NrdR</fullName>
    </recommendedName>
</protein>
<comment type="function">
    <text evidence="1">Negatively regulates transcription of bacterial ribonucleotide reductase nrd genes and operons by binding to NrdR-boxes.</text>
</comment>
<comment type="cofactor">
    <cofactor evidence="1">
        <name>Zn(2+)</name>
        <dbReference type="ChEBI" id="CHEBI:29105"/>
    </cofactor>
    <text evidence="1">Binds 1 zinc ion.</text>
</comment>
<comment type="similarity">
    <text evidence="1">Belongs to the NrdR family.</text>
</comment>
<sequence>MRCPFCGNVDTQVKDSRPAEDHVAIRRRRFCPACGGRFTTYERVQLRDLVVIKSSGKREDFDRDKLERSIRIAMQKRPVEPDRLDQMISGIVRRLESMGETDIPSATIGEIVMEALARIDTVGYVRFASVYKNFQAADDFDKFVSELRPPTGKDS</sequence>
<gene>
    <name evidence="1" type="primary">nrdR</name>
    <name type="ordered locus">Dshi_2257</name>
</gene>
<reference key="1">
    <citation type="journal article" date="2010" name="ISME J.">
        <title>The complete genome sequence of the algal symbiont Dinoroseobacter shibae: a hitchhiker's guide to life in the sea.</title>
        <authorList>
            <person name="Wagner-Dobler I."/>
            <person name="Ballhausen B."/>
            <person name="Berger M."/>
            <person name="Brinkhoff T."/>
            <person name="Buchholz I."/>
            <person name="Bunk B."/>
            <person name="Cypionka H."/>
            <person name="Daniel R."/>
            <person name="Drepper T."/>
            <person name="Gerdts G."/>
            <person name="Hahnke S."/>
            <person name="Han C."/>
            <person name="Jahn D."/>
            <person name="Kalhoefer D."/>
            <person name="Kiss H."/>
            <person name="Klenk H.P."/>
            <person name="Kyrpides N."/>
            <person name="Liebl W."/>
            <person name="Liesegang H."/>
            <person name="Meincke L."/>
            <person name="Pati A."/>
            <person name="Petersen J."/>
            <person name="Piekarski T."/>
            <person name="Pommerenke C."/>
            <person name="Pradella S."/>
            <person name="Pukall R."/>
            <person name="Rabus R."/>
            <person name="Stackebrandt E."/>
            <person name="Thole S."/>
            <person name="Thompson L."/>
            <person name="Tielen P."/>
            <person name="Tomasch J."/>
            <person name="von Jan M."/>
            <person name="Wanphrut N."/>
            <person name="Wichels A."/>
            <person name="Zech H."/>
            <person name="Simon M."/>
        </authorList>
    </citation>
    <scope>NUCLEOTIDE SEQUENCE [LARGE SCALE GENOMIC DNA]</scope>
    <source>
        <strain>DSM 16493 / NCIMB 14021 / DFL 12</strain>
    </source>
</reference>